<protein>
    <recommendedName>
        <fullName evidence="7 8">Beta-glucuronidase</fullName>
        <shortName evidence="7">GUS</shortName>
        <ecNumber evidence="1 2 3 4">3.2.1.31</ecNumber>
    </recommendedName>
    <alternativeName>
        <fullName>Beta-D-glucuronoside glucuronosohydrolase</fullName>
    </alternativeName>
    <alternativeName>
        <fullName evidence="7">EcGUS</fullName>
    </alternativeName>
    <alternativeName>
        <fullName evidence="8">UID</fullName>
    </alternativeName>
</protein>
<evidence type="ECO:0000269" key="1">
    <source>
    </source>
</evidence>
<evidence type="ECO:0000269" key="2">
    <source>
    </source>
</evidence>
<evidence type="ECO:0000269" key="3">
    <source>
    </source>
</evidence>
<evidence type="ECO:0000269" key="4">
    <source>
    </source>
</evidence>
<evidence type="ECO:0000269" key="5">
    <source>
    </source>
</evidence>
<evidence type="ECO:0000269" key="6">
    <source>
    </source>
</evidence>
<evidence type="ECO:0000303" key="7">
    <source>
    </source>
</evidence>
<evidence type="ECO:0000303" key="8">
    <source>
    </source>
</evidence>
<evidence type="ECO:0000305" key="9"/>
<evidence type="ECO:0000305" key="10">
    <source>
    </source>
</evidence>
<evidence type="ECO:0000305" key="11">
    <source>
    </source>
</evidence>
<evidence type="ECO:0007744" key="12">
    <source>
        <dbReference type="PDB" id="3K46"/>
    </source>
</evidence>
<evidence type="ECO:0007744" key="13">
    <source>
        <dbReference type="PDB" id="3K4A"/>
    </source>
</evidence>
<evidence type="ECO:0007744" key="14">
    <source>
        <dbReference type="PDB" id="3K4D"/>
    </source>
</evidence>
<evidence type="ECO:0007744" key="15">
    <source>
        <dbReference type="PDB" id="3LPF"/>
    </source>
</evidence>
<evidence type="ECO:0007744" key="16">
    <source>
        <dbReference type="PDB" id="3LPG"/>
    </source>
</evidence>
<evidence type="ECO:0007744" key="17">
    <source>
        <dbReference type="PDB" id="4JHZ"/>
    </source>
</evidence>
<evidence type="ECO:0007744" key="18">
    <source>
        <dbReference type="PDB" id="5CZK"/>
    </source>
</evidence>
<evidence type="ECO:0007744" key="19">
    <source>
        <dbReference type="PDB" id="6LEG"/>
    </source>
</evidence>
<evidence type="ECO:0007744" key="20">
    <source>
        <dbReference type="PDB" id="6LEJ"/>
    </source>
</evidence>
<evidence type="ECO:0007744" key="21">
    <source>
        <dbReference type="PDB" id="6LEL"/>
    </source>
</evidence>
<evidence type="ECO:0007744" key="22">
    <source>
        <dbReference type="PDB" id="6LEM"/>
    </source>
</evidence>
<evidence type="ECO:0007744" key="23">
    <source>
        <dbReference type="PDB" id="7PR6"/>
    </source>
</evidence>
<evidence type="ECO:0007829" key="24">
    <source>
        <dbReference type="PDB" id="3K46"/>
    </source>
</evidence>
<evidence type="ECO:0007829" key="25">
    <source>
        <dbReference type="PDB" id="3K4A"/>
    </source>
</evidence>
<evidence type="ECO:0007829" key="26">
    <source>
        <dbReference type="PDB" id="3K4D"/>
    </source>
</evidence>
<evidence type="ECO:0007829" key="27">
    <source>
        <dbReference type="PDB" id="3LPF"/>
    </source>
</evidence>
<evidence type="ECO:0007829" key="28">
    <source>
        <dbReference type="PDB" id="3LPG"/>
    </source>
</evidence>
<evidence type="ECO:0007829" key="29">
    <source>
        <dbReference type="PDB" id="5CZK"/>
    </source>
</evidence>
<evidence type="ECO:0007829" key="30">
    <source>
        <dbReference type="PDB" id="6LEL"/>
    </source>
</evidence>
<evidence type="ECO:0007829" key="31">
    <source>
        <dbReference type="PDB" id="6LEM"/>
    </source>
</evidence>
<organism>
    <name type="scientific">Escherichia coli (strain K12)</name>
    <dbReference type="NCBI Taxonomy" id="83333"/>
    <lineage>
        <taxon>Bacteria</taxon>
        <taxon>Pseudomonadati</taxon>
        <taxon>Pseudomonadota</taxon>
        <taxon>Gammaproteobacteria</taxon>
        <taxon>Enterobacterales</taxon>
        <taxon>Enterobacteriaceae</taxon>
        <taxon>Escherichia</taxon>
    </lineage>
</organism>
<feature type="chain" id="PRO_0000057680" description="Beta-glucuronidase">
    <location>
        <begin position="1"/>
        <end position="603"/>
    </location>
</feature>
<feature type="short sequence motif" description="N-K motif" evidence="11">
    <location>
        <begin position="566"/>
        <end position="568"/>
    </location>
</feature>
<feature type="active site" description="Proton donor" evidence="10">
    <location>
        <position position="413"/>
    </location>
</feature>
<feature type="active site" description="Nucleophile" evidence="6 10">
    <location>
        <position position="504"/>
    </location>
</feature>
<feature type="binding site" evidence="10 14">
    <location>
        <position position="163"/>
    </location>
    <ligand>
        <name>D-glucuronate</name>
        <dbReference type="ChEBI" id="CHEBI:58720"/>
    </ligand>
</feature>
<feature type="binding site" evidence="10 14">
    <location>
        <position position="412"/>
    </location>
    <ligand>
        <name>D-glucuronate</name>
        <dbReference type="ChEBI" id="CHEBI:58720"/>
    </ligand>
</feature>
<feature type="binding site" evidence="10 14">
    <location>
        <position position="466"/>
    </location>
    <ligand>
        <name>D-glucuronate</name>
        <dbReference type="ChEBI" id="CHEBI:58720"/>
    </ligand>
</feature>
<feature type="binding site" evidence="10 14">
    <location>
        <position position="472"/>
    </location>
    <ligand>
        <name>D-glucuronate</name>
        <dbReference type="ChEBI" id="CHEBI:58720"/>
    </ligand>
</feature>
<feature type="binding site" evidence="10 14">
    <location>
        <position position="504"/>
    </location>
    <ligand>
        <name>D-glucuronate</name>
        <dbReference type="ChEBI" id="CHEBI:58720"/>
    </ligand>
</feature>
<feature type="binding site" evidence="10 14">
    <location>
        <position position="549"/>
    </location>
    <ligand>
        <name>D-glucuronate</name>
        <dbReference type="ChEBI" id="CHEBI:58720"/>
    </ligand>
</feature>
<feature type="binding site" evidence="10 14">
    <location>
        <position position="568"/>
    </location>
    <ligand>
        <name>D-glucuronate</name>
        <dbReference type="ChEBI" id="CHEBI:58720"/>
    </ligand>
</feature>
<feature type="strand" evidence="27">
    <location>
        <begin position="6"/>
        <end position="8"/>
    </location>
</feature>
<feature type="strand" evidence="27">
    <location>
        <begin position="10"/>
        <end position="12"/>
    </location>
</feature>
<feature type="strand" evidence="27">
    <location>
        <begin position="18"/>
        <end position="26"/>
    </location>
</feature>
<feature type="turn" evidence="27">
    <location>
        <begin position="29"/>
        <end position="33"/>
    </location>
</feature>
<feature type="helix" evidence="27">
    <location>
        <begin position="34"/>
        <end position="36"/>
    </location>
</feature>
<feature type="strand" evidence="27">
    <location>
        <begin position="43"/>
        <end position="49"/>
    </location>
</feature>
<feature type="turn" evidence="27">
    <location>
        <begin position="52"/>
        <end position="55"/>
    </location>
</feature>
<feature type="helix" evidence="27">
    <location>
        <begin position="58"/>
        <end position="61"/>
    </location>
</feature>
<feature type="strand" evidence="27">
    <location>
        <begin position="65"/>
        <end position="74"/>
    </location>
</feature>
<feature type="helix" evidence="29">
    <location>
        <begin position="77"/>
        <end position="79"/>
    </location>
</feature>
<feature type="strand" evidence="24">
    <location>
        <begin position="80"/>
        <end position="82"/>
    </location>
</feature>
<feature type="strand" evidence="27">
    <location>
        <begin position="83"/>
        <end position="89"/>
    </location>
</feature>
<feature type="strand" evidence="27">
    <location>
        <begin position="92"/>
        <end position="101"/>
    </location>
</feature>
<feature type="strand" evidence="27">
    <location>
        <begin position="103"/>
        <end position="107"/>
    </location>
</feature>
<feature type="strand" evidence="27">
    <location>
        <begin position="110"/>
        <end position="112"/>
    </location>
</feature>
<feature type="strand" evidence="27">
    <location>
        <begin position="114"/>
        <end position="117"/>
    </location>
</feature>
<feature type="helix" evidence="27">
    <location>
        <begin position="119"/>
        <end position="121"/>
    </location>
</feature>
<feature type="strand" evidence="27">
    <location>
        <begin position="126"/>
        <end position="135"/>
    </location>
</feature>
<feature type="strand" evidence="27">
    <location>
        <begin position="142"/>
        <end position="144"/>
    </location>
</feature>
<feature type="strand" evidence="27">
    <location>
        <begin position="146"/>
        <end position="150"/>
    </location>
</feature>
<feature type="helix" evidence="31">
    <location>
        <begin position="152"/>
        <end position="154"/>
    </location>
</feature>
<feature type="strand" evidence="27">
    <location>
        <begin position="156"/>
        <end position="164"/>
    </location>
</feature>
<feature type="strand" evidence="27">
    <location>
        <begin position="174"/>
        <end position="179"/>
    </location>
</feature>
<feature type="strand" evidence="27">
    <location>
        <begin position="181"/>
        <end position="191"/>
    </location>
</feature>
<feature type="strand" evidence="28">
    <location>
        <begin position="194"/>
        <end position="197"/>
    </location>
</feature>
<feature type="strand" evidence="27">
    <location>
        <begin position="201"/>
        <end position="209"/>
    </location>
</feature>
<feature type="strand" evidence="27">
    <location>
        <begin position="211"/>
        <end position="217"/>
    </location>
</feature>
<feature type="strand" evidence="24">
    <location>
        <begin position="219"/>
        <end position="221"/>
    </location>
</feature>
<feature type="strand" evidence="27">
    <location>
        <begin position="223"/>
        <end position="228"/>
    </location>
</feature>
<feature type="strand" evidence="31">
    <location>
        <begin position="229"/>
        <end position="231"/>
    </location>
</feature>
<feature type="strand" evidence="27">
    <location>
        <begin position="233"/>
        <end position="235"/>
    </location>
</feature>
<feature type="turn" evidence="27">
    <location>
        <begin position="244"/>
        <end position="246"/>
    </location>
</feature>
<feature type="strand" evidence="27">
    <location>
        <begin position="250"/>
        <end position="257"/>
    </location>
</feature>
<feature type="strand" evidence="27">
    <location>
        <begin position="262"/>
        <end position="269"/>
    </location>
</feature>
<feature type="strand" evidence="27">
    <location>
        <begin position="274"/>
        <end position="277"/>
    </location>
</feature>
<feature type="strand" evidence="27">
    <location>
        <begin position="280"/>
        <end position="283"/>
    </location>
</feature>
<feature type="strand" evidence="27">
    <location>
        <begin position="290"/>
        <end position="295"/>
    </location>
</feature>
<feature type="turn" evidence="27">
    <location>
        <begin position="300"/>
        <end position="304"/>
    </location>
</feature>
<feature type="helix" evidence="27">
    <location>
        <begin position="308"/>
        <end position="321"/>
    </location>
</feature>
<feature type="strand" evidence="27">
    <location>
        <begin position="325"/>
        <end position="328"/>
    </location>
</feature>
<feature type="helix" evidence="27">
    <location>
        <begin position="335"/>
        <end position="344"/>
    </location>
</feature>
<feature type="strand" evidence="27">
    <location>
        <begin position="347"/>
        <end position="351"/>
    </location>
</feature>
<feature type="strand" evidence="30">
    <location>
        <begin position="359"/>
        <end position="361"/>
    </location>
</feature>
<feature type="strand" evidence="28">
    <location>
        <begin position="364"/>
        <end position="366"/>
    </location>
</feature>
<feature type="strand" evidence="27">
    <location>
        <begin position="374"/>
        <end position="376"/>
    </location>
</feature>
<feature type="turn" evidence="27">
    <location>
        <begin position="377"/>
        <end position="379"/>
    </location>
</feature>
<feature type="helix" evidence="27">
    <location>
        <begin position="382"/>
        <end position="399"/>
    </location>
</feature>
<feature type="strand" evidence="27">
    <location>
        <begin position="405"/>
        <end position="413"/>
    </location>
</feature>
<feature type="helix" evidence="27">
    <location>
        <begin position="421"/>
        <end position="435"/>
    </location>
</feature>
<feature type="strand" evidence="27">
    <location>
        <begin position="437"/>
        <end position="439"/>
    </location>
</feature>
<feature type="strand" evidence="27">
    <location>
        <begin position="441"/>
        <end position="446"/>
    </location>
</feature>
<feature type="strand" evidence="24">
    <location>
        <begin position="447"/>
        <end position="449"/>
    </location>
</feature>
<feature type="turn" evidence="27">
    <location>
        <begin position="451"/>
        <end position="453"/>
    </location>
</feature>
<feature type="helix" evidence="27">
    <location>
        <begin position="457"/>
        <end position="459"/>
    </location>
</feature>
<feature type="strand" evidence="27">
    <location>
        <begin position="460"/>
        <end position="466"/>
    </location>
</feature>
<feature type="turn" evidence="27">
    <location>
        <begin position="469"/>
        <end position="471"/>
    </location>
</feature>
<feature type="strand" evidence="27">
    <location>
        <begin position="472"/>
        <end position="474"/>
    </location>
</feature>
<feature type="helix" evidence="27">
    <location>
        <begin position="478"/>
        <end position="496"/>
    </location>
</feature>
<feature type="strand" evidence="27">
    <location>
        <begin position="500"/>
        <end position="504"/>
    </location>
</feature>
<feature type="strand" evidence="26">
    <location>
        <begin position="520"/>
        <end position="522"/>
    </location>
</feature>
<feature type="helix" evidence="27">
    <location>
        <begin position="523"/>
        <end position="537"/>
    </location>
</feature>
<feature type="strand" evidence="27">
    <location>
        <begin position="543"/>
        <end position="552"/>
    </location>
</feature>
<feature type="strand" evidence="25">
    <location>
        <begin position="558"/>
        <end position="561"/>
    </location>
</feature>
<feature type="strand" evidence="27">
    <location>
        <begin position="562"/>
        <end position="566"/>
    </location>
</feature>
<feature type="strand" evidence="27">
    <location>
        <begin position="569"/>
        <end position="571"/>
    </location>
</feature>
<feature type="helix" evidence="27">
    <location>
        <begin position="580"/>
        <end position="590"/>
    </location>
</feature>
<feature type="strand" evidence="25">
    <location>
        <begin position="598"/>
        <end position="600"/>
    </location>
</feature>
<keyword id="KW-0002">3D-structure</keyword>
<keyword id="KW-0903">Direct protein sequencing</keyword>
<keyword id="KW-0326">Glycosidase</keyword>
<keyword id="KW-0378">Hydrolase</keyword>
<keyword id="KW-1185">Reference proteome</keyword>
<proteinExistence type="evidence at protein level"/>
<gene>
    <name type="primary">uidA</name>
    <name type="synonym">gurA</name>
    <name type="synonym">gusA</name>
    <name type="ordered locus">b1617</name>
    <name type="ordered locus">JW1609</name>
</gene>
<accession>P05804</accession>
<name>BGLR_ECOLI</name>
<comment type="function">
    <text evidence="1 2 3 4 5">Displays beta-glucuronidase activity with the artificial substrate p-nitrophenyl-beta-D-glucuronide (PNPG) and with 4-methylumbelliferyl-glucuronide (PubMed:21051639, PubMed:23690068, PubMed:26364932, PubMed:3105604, PubMed:33664385). Is likely capable of scavenging glucuronate from a range of chemically distinct xenobiotic and endobiotic glucuronides present in the gastrointestinal (GI) tract, to be able to utilize these diverse sources of carbon. As part of the GI microbiome, this enzyme is able to reactivate glucuronide drug conjugates, such reactivated compounds can significantly damage the GI tract (PubMed:26364932).</text>
</comment>
<comment type="catalytic activity">
    <reaction evidence="1 2 3 4 5">
        <text>a beta-D-glucuronoside + H2O = D-glucuronate + an alcohol</text>
        <dbReference type="Rhea" id="RHEA:17633"/>
        <dbReference type="ChEBI" id="CHEBI:15377"/>
        <dbReference type="ChEBI" id="CHEBI:30879"/>
        <dbReference type="ChEBI" id="CHEBI:58720"/>
        <dbReference type="ChEBI" id="CHEBI:83411"/>
        <dbReference type="EC" id="3.2.1.31"/>
    </reaction>
    <physiologicalReaction direction="left-to-right" evidence="11">
        <dbReference type="Rhea" id="RHEA:17634"/>
    </physiologicalReaction>
</comment>
<comment type="catalytic activity">
    <reaction evidence="1 5">
        <text>4-methylumbelliferone beta-D-glucuronate + H2O = 4-methylumbelliferone + D-glucuronate</text>
        <dbReference type="Rhea" id="RHEA:76111"/>
        <dbReference type="ChEBI" id="CHEBI:15377"/>
        <dbReference type="ChEBI" id="CHEBI:17224"/>
        <dbReference type="ChEBI" id="CHEBI:58720"/>
        <dbReference type="ChEBI" id="CHEBI:144582"/>
    </reaction>
    <physiologicalReaction direction="left-to-right" evidence="10">
        <dbReference type="Rhea" id="RHEA:76112"/>
    </physiologicalReaction>
</comment>
<comment type="activity regulation">
    <text evidence="1 2 3 5">Potently inhibited by a set of synthetic compounds like thio-urea derivatives and analogs, and uronic isofagomine (UIFG) derivatives. Inhibitors of gut microbial beta-glucuronidases block the reactivation of glucuronidated cancer drugs, and thereby alleviate drug-induced GI toxicity.</text>
</comment>
<comment type="biophysicochemical properties">
    <kinetics>
        <KM evidence="3">0.13 mM for p-nitrophenyl-beta-D-glucuronide</KM>
        <text evidence="3">kcat is 120 sec(-1) with p-nitrophenyl-beta-D-glucuronide as substrate.</text>
    </kinetics>
    <phDependence>
        <text>Optimum pH is 5.0-7.5.</text>
    </phDependence>
    <temperatureDependence>
        <text>Resistant to thermal inactivation at 50 degrees Celsius.</text>
    </temperatureDependence>
</comment>
<comment type="subunit">
    <text evidence="1 4">Homotetramer.</text>
</comment>
<comment type="domain">
    <text evidence="11">The N-K motif seems to be a discriminant that could be employed as a fingerprint to identify beta-glucuronidases from the large GH2 family of proteins.</text>
</comment>
<comment type="similarity">
    <text evidence="9">Belongs to the glycosyl hydrolase 2 family.</text>
</comment>
<reference key="1">
    <citation type="journal article" date="1986" name="Proc. Natl. Acad. Sci. U.S.A.">
        <title>Beta-glucuronidase from Escherichia coli as a gene-fusion marker.</title>
        <authorList>
            <person name="Jefferson R.A."/>
            <person name="Burgess S.M."/>
            <person name="Hirsh D."/>
        </authorList>
    </citation>
    <scope>NUCLEOTIDE SEQUENCE [GENOMIC DNA]</scope>
    <scope>PROTEIN SEQUENCE OF 1-11</scope>
</reference>
<reference key="2">
    <citation type="journal article" date="1994" name="Gene">
        <title>Nucleotide sequence corrections of the uidA open reading frame encoding beta-glucuronidase.</title>
        <authorList>
            <person name="Schlaman H.R."/>
            <person name="Risseeuw E."/>
            <person name="Franke-Van Dijk M.E."/>
            <person name="Hooykaas P.J."/>
        </authorList>
    </citation>
    <scope>SEQUENCE REVISION TO 279</scope>
</reference>
<reference key="3">
    <citation type="journal article" date="1990" name="Plant Mol. Biol.">
        <title>Manipulation of beta-glucuronidase for use as a reporter in vacuolar targeting studies.</title>
        <authorList>
            <person name="Farrell L.B."/>
            <person name="Beachy R.N."/>
        </authorList>
    </citation>
    <scope>SEQUENCE REVISION TO 420-425</scope>
</reference>
<reference key="4">
    <citation type="journal article" date="1996" name="DNA Res.">
        <title>A 570-kb DNA sequence of the Escherichia coli K-12 genome corresponding to the 28.0-40.1 min region on the linkage map.</title>
        <authorList>
            <person name="Aiba H."/>
            <person name="Baba T."/>
            <person name="Fujita K."/>
            <person name="Hayashi K."/>
            <person name="Inada T."/>
            <person name="Isono K."/>
            <person name="Itoh T."/>
            <person name="Kasai H."/>
            <person name="Kashimoto K."/>
            <person name="Kimura S."/>
            <person name="Kitakawa M."/>
            <person name="Kitagawa M."/>
            <person name="Makino K."/>
            <person name="Miki T."/>
            <person name="Mizobuchi K."/>
            <person name="Mori H."/>
            <person name="Mori T."/>
            <person name="Motomura K."/>
            <person name="Nakade S."/>
            <person name="Nakamura Y."/>
            <person name="Nashimoto H."/>
            <person name="Nishio Y."/>
            <person name="Oshima T."/>
            <person name="Saito N."/>
            <person name="Sampei G."/>
            <person name="Seki Y."/>
            <person name="Sivasundaram S."/>
            <person name="Tagami H."/>
            <person name="Takeda J."/>
            <person name="Takemoto K."/>
            <person name="Takeuchi Y."/>
            <person name="Wada C."/>
            <person name="Yamamoto Y."/>
            <person name="Horiuchi T."/>
        </authorList>
    </citation>
    <scope>NUCLEOTIDE SEQUENCE [LARGE SCALE GENOMIC DNA]</scope>
    <source>
        <strain>K12 / W3110 / ATCC 27325 / DSM 5911</strain>
    </source>
</reference>
<reference key="5">
    <citation type="journal article" date="1997" name="Science">
        <title>The complete genome sequence of Escherichia coli K-12.</title>
        <authorList>
            <person name="Blattner F.R."/>
            <person name="Plunkett G. III"/>
            <person name="Bloch C.A."/>
            <person name="Perna N.T."/>
            <person name="Burland V."/>
            <person name="Riley M."/>
            <person name="Collado-Vides J."/>
            <person name="Glasner J.D."/>
            <person name="Rode C.K."/>
            <person name="Mayhew G.F."/>
            <person name="Gregor J."/>
            <person name="Davis N.W."/>
            <person name="Kirkpatrick H.A."/>
            <person name="Goeden M.A."/>
            <person name="Rose D.J."/>
            <person name="Mau B."/>
            <person name="Shao Y."/>
        </authorList>
    </citation>
    <scope>NUCLEOTIDE SEQUENCE [LARGE SCALE GENOMIC DNA]</scope>
    <source>
        <strain>K12 / MG1655 / ATCC 47076</strain>
    </source>
</reference>
<reference key="6">
    <citation type="journal article" date="2006" name="Mol. Syst. Biol.">
        <title>Highly accurate genome sequences of Escherichia coli K-12 strains MG1655 and W3110.</title>
        <authorList>
            <person name="Hayashi K."/>
            <person name="Morooka N."/>
            <person name="Yamamoto Y."/>
            <person name="Fujita K."/>
            <person name="Isono K."/>
            <person name="Choi S."/>
            <person name="Ohtsubo E."/>
            <person name="Baba T."/>
            <person name="Wanner B.L."/>
            <person name="Mori H."/>
            <person name="Horiuchi T."/>
        </authorList>
    </citation>
    <scope>NUCLEOTIDE SEQUENCE [LARGE SCALE GENOMIC DNA]</scope>
    <source>
        <strain>K12 / W3110 / ATCC 27325 / DSM 5911</strain>
    </source>
</reference>
<reference key="7">
    <citation type="journal article" date="1987" name="Biochimie">
        <title>One step purification of Escherichia coli beta-glucuronidase.</title>
        <authorList>
            <person name="Blanco C."/>
            <person name="Nemoz G."/>
        </authorList>
    </citation>
    <scope>PROTEIN SEQUENCE OF 1-5</scope>
    <scope>FUNCTION</scope>
    <scope>SUBUNIT</scope>
    <scope>CATALYTIC ACTIVITY</scope>
</reference>
<reference key="8">
    <citation type="thesis" date="1985" institute="University of Colorado" country="United States">
        <authorList>
            <person name="Jefferson R.A."/>
        </authorList>
    </citation>
    <scope>CHARACTERIZATION</scope>
</reference>
<reference evidence="12 13 14 15 16" key="9">
    <citation type="journal article" date="2010" name="Science">
        <title>Alleviating cancer drug toxicity by inhibiting a bacterial enzyme.</title>
        <authorList>
            <person name="Wallace B.D."/>
            <person name="Wang H."/>
            <person name="Lane K.T."/>
            <person name="Scott J.E."/>
            <person name="Orans J."/>
            <person name="Koo J.S."/>
            <person name="Venkatesh M."/>
            <person name="Jobin C."/>
            <person name="Yeh L.A."/>
            <person name="Mani S."/>
            <person name="Redinbo M.R."/>
        </authorList>
    </citation>
    <scope>X-RAY CRYSTALLOGRAPHY (2.26 ANGSTROMS) OF APOENZYME AND COMPLEXES WITH GLUCARO-D-LACTAM INHIBITOR AND OTHER INHIBITORS</scope>
    <scope>FUNCTION</scope>
    <scope>CATALYTIC ACTIVITY</scope>
    <scope>SUBUNIT</scope>
    <scope>ACTIVITY REGULATION</scope>
</reference>
<reference evidence="17" key="10">
    <citation type="journal article" date="2013" name="Mol. Pharmacol.">
        <title>Molecular insights into microbial beta-glucuronidase inhibition to abrogate CPT-11 toxicity.</title>
        <authorList>
            <person name="Roberts A.B."/>
            <person name="Wallace B.D."/>
            <person name="Venkatesh M.K."/>
            <person name="Mani S."/>
            <person name="Redinbo M.R."/>
        </authorList>
    </citation>
    <scope>X-RAY CRYSTALLOGRAPHY (2.83 ANGSTROMS) OF 1-601 IN COMPLEX WITH AN INHIBITOR</scope>
    <scope>FUNCTION</scope>
    <scope>CATALYTIC ACTIVITY</scope>
    <scope>ACTIVITY REGULATION</scope>
</reference>
<reference evidence="18" key="11">
    <citation type="journal article" date="2015" name="Chem. Biol.">
        <title>Structure and Inhibition of Microbiome beta-Glucuronidases Essential to the Alleviation of Cancer Drug Toxicity.</title>
        <authorList>
            <person name="Wallace B.D."/>
            <person name="Roberts A.B."/>
            <person name="Pollet R.M."/>
            <person name="Ingle J.D."/>
            <person name="Biernat K.A."/>
            <person name="Pellock S.J."/>
            <person name="Venkatesh M.K."/>
            <person name="Guthrie L."/>
            <person name="O'Neal S.K."/>
            <person name="Robinson S.J."/>
            <person name="Dollinger M."/>
            <person name="Figueroa E."/>
            <person name="McShane S.R."/>
            <person name="Cohen R.D."/>
            <person name="Jin J."/>
            <person name="Frye S.V."/>
            <person name="Zamboni W.C."/>
            <person name="Pepe-Ranney C."/>
            <person name="Mani S."/>
            <person name="Kelly L."/>
            <person name="Redinbo M.R."/>
        </authorList>
    </citation>
    <scope>X-RAY CRYSTALLOGRAPHY (2.39 ANGSTROMS) IN COMPLEX WITH INHIBITOR R1</scope>
    <scope>N-K MOTIF</scope>
    <scope>FUNCTION</scope>
    <scope>CATALYTIC ACTIVITY</scope>
    <scope>BIOPHYSICOCHEMICAL PROPERTIES</scope>
    <scope>ACTIVITY REGULATION</scope>
</reference>
<reference evidence="19 20 21 22" key="12">
    <citation type="journal article" date="2021" name="Commun. Biol.">
        <title>Entropy-driven binding of gut bacterial beta-glucuronidase inhibitors ameliorates irinotecan-induced toxicity.</title>
        <authorList>
            <person name="Lin H.Y."/>
            <person name="Chen C.Y."/>
            <person name="Lin T.C."/>
            <person name="Yeh L.F."/>
            <person name="Hsieh W.C."/>
            <person name="Gao S."/>
            <person name="Burnouf P.A."/>
            <person name="Chen B.M."/>
            <person name="Hsieh T.J."/>
            <person name="Dashnyam P."/>
            <person name="Kuo Y.H."/>
            <person name="Tu Z."/>
            <person name="Roffler S.R."/>
            <person name="Lin C.H."/>
        </authorList>
    </citation>
    <scope>X-RAY CRYSTALLOGRAPHY (2.50 ANGSTROMS) IN COMPLEXES WITH INHIBITORS</scope>
    <scope>FUNCTION</scope>
    <scope>CATALYTIC ACTIVITY</scope>
    <scope>ACTIVITY REGULATION</scope>
</reference>
<reference evidence="23" key="13">
    <citation type="journal article" date="2022" name="Proc. Natl. Acad. Sci. U.S.A.">
        <title>Mechanism-based heparanase inhibitors reduce cancer metastasis in vivo.</title>
        <authorList>
            <person name="de Boer C."/>
            <person name="Armstrong Z."/>
            <person name="Lit V.A.J."/>
            <person name="Barash U."/>
            <person name="Ruijgrok G."/>
            <person name="Boyango I."/>
            <person name="Weitzenberg M.M."/>
            <person name="Schroeder S.P."/>
            <person name="Sarris A.J.C."/>
            <person name="Meeuwenoord N.J."/>
            <person name="Bule P."/>
            <person name="Kayal Y."/>
            <person name="Ilan N."/>
            <person name="Codee J.D.C."/>
            <person name="Vlodavsky I."/>
            <person name="Overkleeft H.S."/>
            <person name="Davies G.J."/>
            <person name="Wu L."/>
        </authorList>
    </citation>
    <scope>X-RAY CRYSTALLOGRAPHY (1.99 ANGSTROMS) IN COVALENT COMPLEX WITH AN INHIBITOR</scope>
    <scope>ACTIVE SITE</scope>
</reference>
<sequence>MLRPVETPTREIKKLDGLWAFSLDRENCGIDQRWWESALQESRAIAVPGSFNDQFADADIRNYAGNVWYQREVFIPKGWAGQRIVLRFDAVTHYGKVWVNNQEVMEHQGGYTPFEADVTPYVIAGKSVRITVCVNNELNWQTIPPGMVITDENGKKKQSYFHDFFNYAGIHRSVMLYTTPNTWVDDITVVTHVAQDCNHASVDWQVVANGDVSVELRDADQQVVATGQGTSGTLQVVNPHLWQPGEGYLYELCVTAKSQTECDIYPLRVGIRSVAVKGEQFLINHKPFYFTGFGRHEDADLRGKGFDNVLMVHDHALMDWIGANSYRTSHYPYAEEMLDWADEHGIVVIDETAAVGFNLSLGIGFEAGNKPKELYSEEAVNGETQQAHLQAIKELIARDKNHPSVVMWSIANEPDTRPQGAREYFAPLAEATRKLDPTRPITCVNVMFCDAHTDTISDLFDVLCLNRYYGWYVQSGDLETAEKVLEKELLAWQEKLHQPIIITEYGVDTLAGLHSMYTDMWSEEYQCAWLDMYHRVFDRVSAVVGEQVWNFADFATSQGILRVGGNKKGIFTRDRKPKSAAFLLQKRWTGMNFGEKPQQGGKQ</sequence>
<dbReference type="EC" id="3.2.1.31" evidence="1 2 3 4"/>
<dbReference type="EMBL" id="M14641">
    <property type="protein sequence ID" value="AAA68923.1"/>
    <property type="status" value="ALT_SEQ"/>
    <property type="molecule type" value="Genomic_DNA"/>
</dbReference>
<dbReference type="EMBL" id="S69414">
    <property type="protein sequence ID" value="AAB30197.1"/>
    <property type="molecule type" value="Genomic_DNA"/>
</dbReference>
<dbReference type="EMBL" id="U00096">
    <property type="protein sequence ID" value="AAC74689.1"/>
    <property type="molecule type" value="Genomic_DNA"/>
</dbReference>
<dbReference type="EMBL" id="AP009048">
    <property type="protein sequence ID" value="BAA15368.1"/>
    <property type="molecule type" value="Genomic_DNA"/>
</dbReference>
<dbReference type="PIR" id="C64918">
    <property type="entry name" value="GBECGC"/>
</dbReference>
<dbReference type="RefSeq" id="NP_416134.1">
    <property type="nucleotide sequence ID" value="NC_000913.3"/>
</dbReference>
<dbReference type="RefSeq" id="WP_000945878.1">
    <property type="nucleotide sequence ID" value="NZ_SSZK01000001.1"/>
</dbReference>
<dbReference type="PDB" id="3K46">
    <property type="method" value="X-ray"/>
    <property type="resolution" value="2.50 A"/>
    <property type="chains" value="A/B=1-603"/>
</dbReference>
<dbReference type="PDB" id="3K4A">
    <property type="method" value="X-ray"/>
    <property type="resolution" value="2.90 A"/>
    <property type="chains" value="A/B=1-603"/>
</dbReference>
<dbReference type="PDB" id="3K4D">
    <property type="method" value="X-ray"/>
    <property type="resolution" value="2.39 A"/>
    <property type="chains" value="A/B=1-603"/>
</dbReference>
<dbReference type="PDB" id="3LPF">
    <property type="method" value="X-ray"/>
    <property type="resolution" value="2.26 A"/>
    <property type="chains" value="A/B=1-603"/>
</dbReference>
<dbReference type="PDB" id="3LPG">
    <property type="method" value="X-ray"/>
    <property type="resolution" value="2.42 A"/>
    <property type="chains" value="A/B=1-603"/>
</dbReference>
<dbReference type="PDB" id="4JHZ">
    <property type="method" value="X-ray"/>
    <property type="resolution" value="2.83 A"/>
    <property type="chains" value="A/B=1-601"/>
</dbReference>
<dbReference type="PDB" id="5CZK">
    <property type="method" value="X-ray"/>
    <property type="resolution" value="2.39 A"/>
    <property type="chains" value="A/B=1-603"/>
</dbReference>
<dbReference type="PDB" id="6LEG">
    <property type="method" value="X-ray"/>
    <property type="resolution" value="2.60 A"/>
    <property type="chains" value="A/B/C/D=1-603"/>
</dbReference>
<dbReference type="PDB" id="6LEJ">
    <property type="method" value="X-ray"/>
    <property type="resolution" value="2.62 A"/>
    <property type="chains" value="A/B=1-603"/>
</dbReference>
<dbReference type="PDB" id="6LEL">
    <property type="method" value="X-ray"/>
    <property type="resolution" value="2.50 A"/>
    <property type="chains" value="A/B=1-603"/>
</dbReference>
<dbReference type="PDB" id="6LEM">
    <property type="method" value="X-ray"/>
    <property type="resolution" value="3.19 A"/>
    <property type="chains" value="A/B=1-603"/>
</dbReference>
<dbReference type="PDB" id="7PR6">
    <property type="method" value="X-ray"/>
    <property type="resolution" value="1.99 A"/>
    <property type="chains" value="AAA/BBB=18-599"/>
</dbReference>
<dbReference type="PDB" id="8OHX">
    <property type="method" value="X-ray"/>
    <property type="resolution" value="1.95 A"/>
    <property type="chains" value="AAA/BBB=1-599"/>
</dbReference>
<dbReference type="PDBsum" id="3K46"/>
<dbReference type="PDBsum" id="3K4A"/>
<dbReference type="PDBsum" id="3K4D"/>
<dbReference type="PDBsum" id="3LPF"/>
<dbReference type="PDBsum" id="3LPG"/>
<dbReference type="PDBsum" id="4JHZ"/>
<dbReference type="PDBsum" id="5CZK"/>
<dbReference type="PDBsum" id="6LEG"/>
<dbReference type="PDBsum" id="6LEJ"/>
<dbReference type="PDBsum" id="6LEL"/>
<dbReference type="PDBsum" id="6LEM"/>
<dbReference type="PDBsum" id="7PR6"/>
<dbReference type="PDBsum" id="8OHX"/>
<dbReference type="SMR" id="P05804"/>
<dbReference type="BioGRID" id="4263483">
    <property type="interactions" value="15"/>
</dbReference>
<dbReference type="DIP" id="DIP-11086N"/>
<dbReference type="FunCoup" id="P05804">
    <property type="interactions" value="681"/>
</dbReference>
<dbReference type="IntAct" id="P05804">
    <property type="interactions" value="2"/>
</dbReference>
<dbReference type="STRING" id="511145.b1617"/>
<dbReference type="BindingDB" id="P05804"/>
<dbReference type="ChEMBL" id="CHEMBL3217380"/>
<dbReference type="DrugCentral" id="P05804"/>
<dbReference type="CAZy" id="GH2">
    <property type="family name" value="Glycoside Hydrolase Family 2"/>
</dbReference>
<dbReference type="jPOST" id="P05804"/>
<dbReference type="PaxDb" id="511145-b1617"/>
<dbReference type="EnsemblBacteria" id="AAC74689">
    <property type="protein sequence ID" value="AAC74689"/>
    <property type="gene ID" value="b1617"/>
</dbReference>
<dbReference type="GeneID" id="93775766"/>
<dbReference type="GeneID" id="946149"/>
<dbReference type="KEGG" id="ecj:JW1609"/>
<dbReference type="KEGG" id="eco:b1617"/>
<dbReference type="KEGG" id="ecoc:C3026_09300"/>
<dbReference type="PATRIC" id="fig|1411691.4.peg.644"/>
<dbReference type="EchoBASE" id="EB1048"/>
<dbReference type="eggNOG" id="COG3250">
    <property type="taxonomic scope" value="Bacteria"/>
</dbReference>
<dbReference type="HOGENOM" id="CLU_006501_6_1_6"/>
<dbReference type="InParanoid" id="P05804"/>
<dbReference type="OMA" id="IHDHVGW"/>
<dbReference type="OrthoDB" id="9758603at2"/>
<dbReference type="PhylomeDB" id="P05804"/>
<dbReference type="BioCyc" id="EcoCyc:BETA-GLUCURONID-MONOMER"/>
<dbReference type="BioCyc" id="MetaCyc:BETA-GLUCURONID-MONOMER"/>
<dbReference type="BRENDA" id="3.2.1.31">
    <property type="organism ID" value="2026"/>
</dbReference>
<dbReference type="SABIO-RK" id="P05804"/>
<dbReference type="EvolutionaryTrace" id="P05804"/>
<dbReference type="PRO" id="PR:P05804"/>
<dbReference type="Proteomes" id="UP000000625">
    <property type="component" value="Chromosome"/>
</dbReference>
<dbReference type="GO" id="GO:0005829">
    <property type="term" value="C:cytosol"/>
    <property type="evidence" value="ECO:0000314"/>
    <property type="project" value="EcoCyc"/>
</dbReference>
<dbReference type="GO" id="GO:0032991">
    <property type="term" value="C:protein-containing complex"/>
    <property type="evidence" value="ECO:0000314"/>
    <property type="project" value="EcoCyc"/>
</dbReference>
<dbReference type="GO" id="GO:0004566">
    <property type="term" value="F:beta-glucuronidase activity"/>
    <property type="evidence" value="ECO:0000314"/>
    <property type="project" value="EcoCyc"/>
</dbReference>
<dbReference type="GO" id="GO:0030246">
    <property type="term" value="F:carbohydrate binding"/>
    <property type="evidence" value="ECO:0000318"/>
    <property type="project" value="GO_Central"/>
</dbReference>
<dbReference type="GO" id="GO:0042802">
    <property type="term" value="F:identical protein binding"/>
    <property type="evidence" value="ECO:0000314"/>
    <property type="project" value="EcoCyc"/>
</dbReference>
<dbReference type="GO" id="GO:0005975">
    <property type="term" value="P:carbohydrate metabolic process"/>
    <property type="evidence" value="ECO:0007669"/>
    <property type="project" value="InterPro"/>
</dbReference>
<dbReference type="GO" id="GO:0019391">
    <property type="term" value="P:glucuronoside catabolic process"/>
    <property type="evidence" value="ECO:0000315"/>
    <property type="project" value="EcoCyc"/>
</dbReference>
<dbReference type="FunFam" id="2.60.120.260:FF:000027">
    <property type="entry name" value="Beta-glucuronidase"/>
    <property type="match status" value="1"/>
</dbReference>
<dbReference type="FunFam" id="2.60.40.10:FF:001198">
    <property type="entry name" value="Beta-glucuronidase UidA"/>
    <property type="match status" value="1"/>
</dbReference>
<dbReference type="FunFam" id="3.20.20.80:FF:000080">
    <property type="entry name" value="Beta-glucuronidase UidA"/>
    <property type="match status" value="1"/>
</dbReference>
<dbReference type="Gene3D" id="2.60.120.260">
    <property type="entry name" value="Galactose-binding domain-like"/>
    <property type="match status" value="1"/>
</dbReference>
<dbReference type="Gene3D" id="3.20.20.80">
    <property type="entry name" value="Glycosidases"/>
    <property type="match status" value="1"/>
</dbReference>
<dbReference type="Gene3D" id="2.60.40.10">
    <property type="entry name" value="Immunoglobulins"/>
    <property type="match status" value="1"/>
</dbReference>
<dbReference type="InterPro" id="IPR036156">
    <property type="entry name" value="Beta-gal/glucu_dom_sf"/>
</dbReference>
<dbReference type="InterPro" id="IPR008979">
    <property type="entry name" value="Galactose-bd-like_sf"/>
</dbReference>
<dbReference type="InterPro" id="IPR006101">
    <property type="entry name" value="Glyco_hydro_2"/>
</dbReference>
<dbReference type="InterPro" id="IPR023232">
    <property type="entry name" value="Glyco_hydro_2_AS"/>
</dbReference>
<dbReference type="InterPro" id="IPR006103">
    <property type="entry name" value="Glyco_hydro_2_cat"/>
</dbReference>
<dbReference type="InterPro" id="IPR023230">
    <property type="entry name" value="Glyco_hydro_2_CS"/>
</dbReference>
<dbReference type="InterPro" id="IPR006102">
    <property type="entry name" value="Glyco_hydro_2_Ig-like"/>
</dbReference>
<dbReference type="InterPro" id="IPR006104">
    <property type="entry name" value="Glyco_hydro_2_N"/>
</dbReference>
<dbReference type="InterPro" id="IPR017853">
    <property type="entry name" value="Glycoside_hydrolase_SF"/>
</dbReference>
<dbReference type="InterPro" id="IPR013783">
    <property type="entry name" value="Ig-like_fold"/>
</dbReference>
<dbReference type="NCBIfam" id="NF007538">
    <property type="entry name" value="PRK10150.1"/>
    <property type="match status" value="1"/>
</dbReference>
<dbReference type="PANTHER" id="PTHR10066">
    <property type="entry name" value="BETA-GLUCURONIDASE"/>
    <property type="match status" value="1"/>
</dbReference>
<dbReference type="PANTHER" id="PTHR10066:SF67">
    <property type="entry name" value="BETA-GLUCURONIDASE"/>
    <property type="match status" value="1"/>
</dbReference>
<dbReference type="Pfam" id="PF00703">
    <property type="entry name" value="Glyco_hydro_2"/>
    <property type="match status" value="1"/>
</dbReference>
<dbReference type="Pfam" id="PF02836">
    <property type="entry name" value="Glyco_hydro_2_C"/>
    <property type="match status" value="1"/>
</dbReference>
<dbReference type="Pfam" id="PF02837">
    <property type="entry name" value="Glyco_hydro_2_N"/>
    <property type="match status" value="1"/>
</dbReference>
<dbReference type="PRINTS" id="PR00132">
    <property type="entry name" value="GLHYDRLASE2"/>
</dbReference>
<dbReference type="SUPFAM" id="SSF51445">
    <property type="entry name" value="(Trans)glycosidases"/>
    <property type="match status" value="1"/>
</dbReference>
<dbReference type="SUPFAM" id="SSF49303">
    <property type="entry name" value="beta-Galactosidase/glucuronidase domain"/>
    <property type="match status" value="1"/>
</dbReference>
<dbReference type="SUPFAM" id="SSF49785">
    <property type="entry name" value="Galactose-binding domain-like"/>
    <property type="match status" value="1"/>
</dbReference>
<dbReference type="PROSITE" id="PS00719">
    <property type="entry name" value="GLYCOSYL_HYDROL_F2_1"/>
    <property type="match status" value="1"/>
</dbReference>
<dbReference type="PROSITE" id="PS00608">
    <property type="entry name" value="GLYCOSYL_HYDROL_F2_2"/>
    <property type="match status" value="1"/>
</dbReference>